<accession>P9WLC8</accession>
<accession>Q50659</accession>
<keyword id="KW-1185">Reference proteome</keyword>
<keyword id="KW-0732">Signal</keyword>
<sequence>MTRVALLTTGRELSQAAPPARARTPLPVPTPRGERPDDGGHAPHRDRRVNQRRRQVGDRRAQRGVDEHPWRRPDERPNDHLPQRNSERPEGVRGQRIRDAGDEALTDHRPQSAPFDLCIEAMGAIDTQQRLGVIPACAPAEKAGRVTKVSSSGPNSTPLPAARIGPGTNNAPSAADTTTYARGAIGPVATTIALRTPSTWMTRATATR</sequence>
<dbReference type="EMBL" id="AE000516">
    <property type="protein sequence ID" value="AAK46649.1"/>
    <property type="molecule type" value="Genomic_DNA"/>
</dbReference>
<dbReference type="PIR" id="F70734">
    <property type="entry name" value="F70734"/>
</dbReference>
<dbReference type="KEGG" id="mtc:MT2363"/>
<dbReference type="HOGENOM" id="CLU_115816_0_0_11"/>
<dbReference type="Proteomes" id="UP000001020">
    <property type="component" value="Chromosome"/>
</dbReference>
<feature type="signal peptide" evidence="1">
    <location>
        <begin position="1"/>
        <end position="16"/>
    </location>
</feature>
<feature type="chain" id="PRO_0000427501" description="Uncharacterized protein MT2363">
    <location>
        <begin position="17"/>
        <end position="208"/>
    </location>
</feature>
<feature type="region of interest" description="Disordered" evidence="2">
    <location>
        <begin position="1"/>
        <end position="95"/>
    </location>
</feature>
<feature type="region of interest" description="Disordered" evidence="2">
    <location>
        <begin position="145"/>
        <end position="176"/>
    </location>
</feature>
<feature type="compositionally biased region" description="Low complexity" evidence="2">
    <location>
        <begin position="16"/>
        <end position="25"/>
    </location>
</feature>
<feature type="compositionally biased region" description="Basic and acidic residues" evidence="2">
    <location>
        <begin position="32"/>
        <end position="43"/>
    </location>
</feature>
<feature type="compositionally biased region" description="Basic residues" evidence="2">
    <location>
        <begin position="44"/>
        <end position="54"/>
    </location>
</feature>
<feature type="compositionally biased region" description="Basic and acidic residues" evidence="2">
    <location>
        <begin position="55"/>
        <end position="95"/>
    </location>
</feature>
<feature type="compositionally biased region" description="Polar residues" evidence="2">
    <location>
        <begin position="148"/>
        <end position="158"/>
    </location>
</feature>
<feature type="compositionally biased region" description="Polar residues" evidence="2">
    <location>
        <begin position="167"/>
        <end position="176"/>
    </location>
</feature>
<reference key="1">
    <citation type="journal article" date="2002" name="J. Bacteriol.">
        <title>Whole-genome comparison of Mycobacterium tuberculosis clinical and laboratory strains.</title>
        <authorList>
            <person name="Fleischmann R.D."/>
            <person name="Alland D."/>
            <person name="Eisen J.A."/>
            <person name="Carpenter L."/>
            <person name="White O."/>
            <person name="Peterson J.D."/>
            <person name="DeBoy R.T."/>
            <person name="Dodson R.J."/>
            <person name="Gwinn M.L."/>
            <person name="Haft D.H."/>
            <person name="Hickey E.K."/>
            <person name="Kolonay J.F."/>
            <person name="Nelson W.C."/>
            <person name="Umayam L.A."/>
            <person name="Ermolaeva M.D."/>
            <person name="Salzberg S.L."/>
            <person name="Delcher A."/>
            <person name="Utterback T.R."/>
            <person name="Weidman J.F."/>
            <person name="Khouri H.M."/>
            <person name="Gill J."/>
            <person name="Mikula A."/>
            <person name="Bishai W."/>
            <person name="Jacobs W.R. Jr."/>
            <person name="Venter J.C."/>
            <person name="Fraser C.M."/>
        </authorList>
    </citation>
    <scope>NUCLEOTIDE SEQUENCE [LARGE SCALE GENOMIC DNA]</scope>
    <source>
        <strain>CDC 1551 / Oshkosh</strain>
    </source>
</reference>
<proteinExistence type="inferred from homology"/>
<gene>
    <name type="ordered locus">MT2363</name>
</gene>
<evidence type="ECO:0000255" key="1"/>
<evidence type="ECO:0000256" key="2">
    <source>
        <dbReference type="SAM" id="MobiDB-lite"/>
    </source>
</evidence>
<name>Y2306_MYCTO</name>
<protein>
    <recommendedName>
        <fullName>Uncharacterized protein MT2363</fullName>
    </recommendedName>
</protein>
<organism>
    <name type="scientific">Mycobacterium tuberculosis (strain CDC 1551 / Oshkosh)</name>
    <dbReference type="NCBI Taxonomy" id="83331"/>
    <lineage>
        <taxon>Bacteria</taxon>
        <taxon>Bacillati</taxon>
        <taxon>Actinomycetota</taxon>
        <taxon>Actinomycetes</taxon>
        <taxon>Mycobacteriales</taxon>
        <taxon>Mycobacteriaceae</taxon>
        <taxon>Mycobacterium</taxon>
        <taxon>Mycobacterium tuberculosis complex</taxon>
    </lineage>
</organism>